<protein>
    <recommendedName>
        <fullName evidence="5">Homeobox-DDT domain protein RLT3</fullName>
    </recommendedName>
    <alternativeName>
        <fullName evidence="5">Protein RINGLET 3</fullName>
    </alternativeName>
</protein>
<dbReference type="EMBL" id="AL049640">
    <property type="protein sequence ID" value="CAB40992.1"/>
    <property type="status" value="ALT_SEQ"/>
    <property type="molecule type" value="Genomic_DNA"/>
</dbReference>
<dbReference type="EMBL" id="AL161534">
    <property type="protein sequence ID" value="CAB78317.1"/>
    <property type="status" value="ALT_SEQ"/>
    <property type="molecule type" value="Genomic_DNA"/>
</dbReference>
<dbReference type="EMBL" id="CP002687">
    <property type="status" value="NOT_ANNOTATED_CDS"/>
    <property type="molecule type" value="Genomic_DNA"/>
</dbReference>
<dbReference type="PIR" id="T06633">
    <property type="entry name" value="T06633"/>
</dbReference>
<dbReference type="STRING" id="3702.F4JRF5"/>
<dbReference type="PaxDb" id="3702-AT4G12750.1"/>
<dbReference type="Araport" id="AT4G12750"/>
<dbReference type="TAIR" id="AT4G12750"/>
<dbReference type="eggNOG" id="ENOG502QSVY">
    <property type="taxonomic scope" value="Eukaryota"/>
</dbReference>
<dbReference type="HOGENOM" id="CLU_001241_1_0_1"/>
<dbReference type="InParanoid" id="F4JRF5"/>
<dbReference type="PRO" id="PR:F4JRF5"/>
<dbReference type="Proteomes" id="UP000006548">
    <property type="component" value="Chromosome 4"/>
</dbReference>
<dbReference type="ExpressionAtlas" id="F4JRF5">
    <property type="expression patterns" value="baseline and differential"/>
</dbReference>
<dbReference type="GO" id="GO:0005634">
    <property type="term" value="C:nucleus"/>
    <property type="evidence" value="ECO:0000318"/>
    <property type="project" value="GO_Central"/>
</dbReference>
<dbReference type="GO" id="GO:0005667">
    <property type="term" value="C:transcription regulator complex"/>
    <property type="evidence" value="ECO:0000318"/>
    <property type="project" value="GO_Central"/>
</dbReference>
<dbReference type="GO" id="GO:0000981">
    <property type="term" value="F:DNA-binding transcription factor activity, RNA polymerase II-specific"/>
    <property type="evidence" value="ECO:0000318"/>
    <property type="project" value="GO_Central"/>
</dbReference>
<dbReference type="GO" id="GO:0000978">
    <property type="term" value="F:RNA polymerase II cis-regulatory region sequence-specific DNA binding"/>
    <property type="evidence" value="ECO:0000318"/>
    <property type="project" value="GO_Central"/>
</dbReference>
<dbReference type="GO" id="GO:0009908">
    <property type="term" value="P:flower development"/>
    <property type="evidence" value="ECO:0007669"/>
    <property type="project" value="UniProtKB-KW"/>
</dbReference>
<dbReference type="GO" id="GO:0006357">
    <property type="term" value="P:regulation of transcription by RNA polymerase II"/>
    <property type="evidence" value="ECO:0000318"/>
    <property type="project" value="GO_Central"/>
</dbReference>
<dbReference type="CDD" id="cd00086">
    <property type="entry name" value="homeodomain"/>
    <property type="match status" value="1"/>
</dbReference>
<dbReference type="Gene3D" id="1.10.10.60">
    <property type="entry name" value="Homeodomain-like"/>
    <property type="match status" value="1"/>
</dbReference>
<dbReference type="InterPro" id="IPR007759">
    <property type="entry name" value="Asxl_HARE-HTH"/>
</dbReference>
<dbReference type="InterPro" id="IPR018501">
    <property type="entry name" value="DDT_dom"/>
</dbReference>
<dbReference type="InterPro" id="IPR001356">
    <property type="entry name" value="HD"/>
</dbReference>
<dbReference type="InterPro" id="IPR009057">
    <property type="entry name" value="Homeodomain-like_sf"/>
</dbReference>
<dbReference type="InterPro" id="IPR044977">
    <property type="entry name" value="RLT1-3"/>
</dbReference>
<dbReference type="InterPro" id="IPR028942">
    <property type="entry name" value="WHIM1_dom"/>
</dbReference>
<dbReference type="InterPro" id="IPR028941">
    <property type="entry name" value="WHIM2_dom"/>
</dbReference>
<dbReference type="PANTHER" id="PTHR36968">
    <property type="entry name" value="HOMEOBOX-DDT DOMAIN PROTEIN RLT2"/>
    <property type="match status" value="1"/>
</dbReference>
<dbReference type="PANTHER" id="PTHR36968:SF8">
    <property type="entry name" value="HOMEOBOX-DDT DOMAIN PROTEIN RLT3 ISOFORM X1"/>
    <property type="match status" value="1"/>
</dbReference>
<dbReference type="Pfam" id="PF02791">
    <property type="entry name" value="DDT"/>
    <property type="match status" value="1"/>
</dbReference>
<dbReference type="Pfam" id="PF05066">
    <property type="entry name" value="HARE-HTH"/>
    <property type="match status" value="1"/>
</dbReference>
<dbReference type="Pfam" id="PF00046">
    <property type="entry name" value="Homeodomain"/>
    <property type="match status" value="1"/>
</dbReference>
<dbReference type="Pfam" id="PF15612">
    <property type="entry name" value="WHIM1"/>
    <property type="match status" value="1"/>
</dbReference>
<dbReference type="Pfam" id="PF15613">
    <property type="entry name" value="WSD"/>
    <property type="match status" value="1"/>
</dbReference>
<dbReference type="SMART" id="SM00571">
    <property type="entry name" value="DDT"/>
    <property type="match status" value="1"/>
</dbReference>
<dbReference type="SMART" id="SM00389">
    <property type="entry name" value="HOX"/>
    <property type="match status" value="1"/>
</dbReference>
<dbReference type="SUPFAM" id="SSF46689">
    <property type="entry name" value="Homeodomain-like"/>
    <property type="match status" value="1"/>
</dbReference>
<dbReference type="PROSITE" id="PS50827">
    <property type="entry name" value="DDT"/>
    <property type="match status" value="1"/>
</dbReference>
<dbReference type="PROSITE" id="PS50071">
    <property type="entry name" value="HOMEOBOX_2"/>
    <property type="match status" value="1"/>
</dbReference>
<reference key="1">
    <citation type="journal article" date="1999" name="Nature">
        <title>Sequence and analysis of chromosome 4 of the plant Arabidopsis thaliana.</title>
        <authorList>
            <person name="Mayer K.F.X."/>
            <person name="Schueller C."/>
            <person name="Wambutt R."/>
            <person name="Murphy G."/>
            <person name="Volckaert G."/>
            <person name="Pohl T."/>
            <person name="Duesterhoeft A."/>
            <person name="Stiekema W."/>
            <person name="Entian K.-D."/>
            <person name="Terryn N."/>
            <person name="Harris B."/>
            <person name="Ansorge W."/>
            <person name="Brandt P."/>
            <person name="Grivell L.A."/>
            <person name="Rieger M."/>
            <person name="Weichselgartner M."/>
            <person name="de Simone V."/>
            <person name="Obermaier B."/>
            <person name="Mache R."/>
            <person name="Mueller M."/>
            <person name="Kreis M."/>
            <person name="Delseny M."/>
            <person name="Puigdomenech P."/>
            <person name="Watson M."/>
            <person name="Schmidtheini T."/>
            <person name="Reichert B."/>
            <person name="Portetelle D."/>
            <person name="Perez-Alonso M."/>
            <person name="Boutry M."/>
            <person name="Bancroft I."/>
            <person name="Vos P."/>
            <person name="Hoheisel J."/>
            <person name="Zimmermann W."/>
            <person name="Wedler H."/>
            <person name="Ridley P."/>
            <person name="Langham S.-A."/>
            <person name="McCullagh B."/>
            <person name="Bilham L."/>
            <person name="Robben J."/>
            <person name="van der Schueren J."/>
            <person name="Grymonprez B."/>
            <person name="Chuang Y.-J."/>
            <person name="Vandenbussche F."/>
            <person name="Braeken M."/>
            <person name="Weltjens I."/>
            <person name="Voet M."/>
            <person name="Bastiaens I."/>
            <person name="Aert R."/>
            <person name="Defoor E."/>
            <person name="Weitzenegger T."/>
            <person name="Bothe G."/>
            <person name="Ramsperger U."/>
            <person name="Hilbert H."/>
            <person name="Braun M."/>
            <person name="Holzer E."/>
            <person name="Brandt A."/>
            <person name="Peters S."/>
            <person name="van Staveren M."/>
            <person name="Dirkse W."/>
            <person name="Mooijman P."/>
            <person name="Klein Lankhorst R."/>
            <person name="Rose M."/>
            <person name="Hauf J."/>
            <person name="Koetter P."/>
            <person name="Berneiser S."/>
            <person name="Hempel S."/>
            <person name="Feldpausch M."/>
            <person name="Lamberth S."/>
            <person name="Van den Daele H."/>
            <person name="De Keyser A."/>
            <person name="Buysshaert C."/>
            <person name="Gielen J."/>
            <person name="Villarroel R."/>
            <person name="De Clercq R."/>
            <person name="van Montagu M."/>
            <person name="Rogers J."/>
            <person name="Cronin A."/>
            <person name="Quail M.A."/>
            <person name="Bray-Allen S."/>
            <person name="Clark L."/>
            <person name="Doggett J."/>
            <person name="Hall S."/>
            <person name="Kay M."/>
            <person name="Lennard N."/>
            <person name="McLay K."/>
            <person name="Mayes R."/>
            <person name="Pettett A."/>
            <person name="Rajandream M.A."/>
            <person name="Lyne M."/>
            <person name="Benes V."/>
            <person name="Rechmann S."/>
            <person name="Borkova D."/>
            <person name="Bloecker H."/>
            <person name="Scharfe M."/>
            <person name="Grimm M."/>
            <person name="Loehnert T.-H."/>
            <person name="Dose S."/>
            <person name="de Haan M."/>
            <person name="Maarse A.C."/>
            <person name="Schaefer M."/>
            <person name="Mueller-Auer S."/>
            <person name="Gabel C."/>
            <person name="Fuchs M."/>
            <person name="Fartmann B."/>
            <person name="Granderath K."/>
            <person name="Dauner D."/>
            <person name="Herzl A."/>
            <person name="Neumann S."/>
            <person name="Argiriou A."/>
            <person name="Vitale D."/>
            <person name="Liguori R."/>
            <person name="Piravandi E."/>
            <person name="Massenet O."/>
            <person name="Quigley F."/>
            <person name="Clabauld G."/>
            <person name="Muendlein A."/>
            <person name="Felber R."/>
            <person name="Schnabl S."/>
            <person name="Hiller R."/>
            <person name="Schmidt W."/>
            <person name="Lecharny A."/>
            <person name="Aubourg S."/>
            <person name="Chefdor F."/>
            <person name="Cooke R."/>
            <person name="Berger C."/>
            <person name="Monfort A."/>
            <person name="Casacuberta E."/>
            <person name="Gibbons T."/>
            <person name="Weber N."/>
            <person name="Vandenbol M."/>
            <person name="Bargues M."/>
            <person name="Terol J."/>
            <person name="Torres A."/>
            <person name="Perez-Perez A."/>
            <person name="Purnelle B."/>
            <person name="Bent E."/>
            <person name="Johnson S."/>
            <person name="Tacon D."/>
            <person name="Jesse T."/>
            <person name="Heijnen L."/>
            <person name="Schwarz S."/>
            <person name="Scholler P."/>
            <person name="Heber S."/>
            <person name="Francs P."/>
            <person name="Bielke C."/>
            <person name="Frishman D."/>
            <person name="Haase D."/>
            <person name="Lemcke K."/>
            <person name="Mewes H.-W."/>
            <person name="Stocker S."/>
            <person name="Zaccaria P."/>
            <person name="Bevan M."/>
            <person name="Wilson R.K."/>
            <person name="de la Bastide M."/>
            <person name="Habermann K."/>
            <person name="Parnell L."/>
            <person name="Dedhia N."/>
            <person name="Gnoj L."/>
            <person name="Schutz K."/>
            <person name="Huang E."/>
            <person name="Spiegel L."/>
            <person name="Sekhon M."/>
            <person name="Murray J."/>
            <person name="Sheet P."/>
            <person name="Cordes M."/>
            <person name="Abu-Threideh J."/>
            <person name="Stoneking T."/>
            <person name="Kalicki J."/>
            <person name="Graves T."/>
            <person name="Harmon G."/>
            <person name="Edwards J."/>
            <person name="Latreille P."/>
            <person name="Courtney L."/>
            <person name="Cloud J."/>
            <person name="Abbott A."/>
            <person name="Scott K."/>
            <person name="Johnson D."/>
            <person name="Minx P."/>
            <person name="Bentley D."/>
            <person name="Fulton B."/>
            <person name="Miller N."/>
            <person name="Greco T."/>
            <person name="Kemp K."/>
            <person name="Kramer J."/>
            <person name="Fulton L."/>
            <person name="Mardis E."/>
            <person name="Dante M."/>
            <person name="Pepin K."/>
            <person name="Hillier L.W."/>
            <person name="Nelson J."/>
            <person name="Spieth J."/>
            <person name="Ryan E."/>
            <person name="Andrews S."/>
            <person name="Geisel C."/>
            <person name="Layman D."/>
            <person name="Du H."/>
            <person name="Ali J."/>
            <person name="Berghoff A."/>
            <person name="Jones K."/>
            <person name="Drone K."/>
            <person name="Cotton M."/>
            <person name="Joshu C."/>
            <person name="Antonoiu B."/>
            <person name="Zidanic M."/>
            <person name="Strong C."/>
            <person name="Sun H."/>
            <person name="Lamar B."/>
            <person name="Yordan C."/>
            <person name="Ma P."/>
            <person name="Zhong J."/>
            <person name="Preston R."/>
            <person name="Vil D."/>
            <person name="Shekher M."/>
            <person name="Matero A."/>
            <person name="Shah R."/>
            <person name="Swaby I.K."/>
            <person name="O'Shaughnessy A."/>
            <person name="Rodriguez M."/>
            <person name="Hoffman J."/>
            <person name="Till S."/>
            <person name="Granat S."/>
            <person name="Shohdy N."/>
            <person name="Hasegawa A."/>
            <person name="Hameed A."/>
            <person name="Lodhi M."/>
            <person name="Johnson A."/>
            <person name="Chen E."/>
            <person name="Marra M.A."/>
            <person name="Martienssen R."/>
            <person name="McCombie W.R."/>
        </authorList>
    </citation>
    <scope>NUCLEOTIDE SEQUENCE [LARGE SCALE GENOMIC DNA]</scope>
    <source>
        <strain>cv. Columbia</strain>
    </source>
</reference>
<reference key="2">
    <citation type="journal article" date="2017" name="Plant J.">
        <title>Araport11: a complete reannotation of the Arabidopsis thaliana reference genome.</title>
        <authorList>
            <person name="Cheng C.Y."/>
            <person name="Krishnakumar V."/>
            <person name="Chan A.P."/>
            <person name="Thibaud-Nissen F."/>
            <person name="Schobel S."/>
            <person name="Town C.D."/>
        </authorList>
    </citation>
    <scope>GENOME REANNOTATION</scope>
    <source>
        <strain>cv. Columbia</strain>
    </source>
</reference>
<accession>F4JRF5</accession>
<accession>Q9SU11</accession>
<proteinExistence type="inferred from homology"/>
<sequence>MKRKSPLQVQALEGFYLEQMYPTPKEMEDLGKSLGLTLKEVRGWFKRRRSRGKGVKSMANDGLGAKNPQLYDRSLMRSSTSSRCVGVAVEERCIVGTRKASCQNLLPSSHILAKVFRKDGPSLGSEFDHLPSGARKASWLGTSSVGQQKQKVARKRKISELMDHTSQDCIQENATVMKHGIGKGLMTVWRVMNPNRRDVSPCVDLLDERATLPQSSARNPPHQKKKQRQLASILKQKLLQKRSTEKKRRSIHREAELNKDETQREFKENCELAADGEVFKETCQTISTLVDDEELEMRERHERGNPLTCSCHHPSSGSHGCFLCKGIAMRSSDSSLLFPDLLPKFPPNSVQMRMPFGLHPWNSSPESVKKLFKVVHFLYTYSVTLDIGPFTLDEFTRAFHDKDSLLLGKIHLSLLKLLLLDVETELERGSFSNLSISCKFLALLQSVESQILILDMWRNSLNSLTWTELLRQILVAAGYGSLKCAVQSEELSKERKLMKKYGLRLGTLKGELFRMLNGQGNNGLKISELADAPEVAVLNLATVPEERENSICSTLASDITLFEKISESTYRVRVNCFSEDPDKSQSDSDDSGSVDDESDDCSISSGDEIEHVSENPALRKVKCRKRRKHKSKMREVCSEIDESHPGEPWLLGLMEGEYSDLSVEEKLDVFVALIDLLSSGSTIRMEDLPRAVADCAPSIYSHGSGGKIKRSSSNQYSYPRGSWVHGGELYGIKALSKSSDSHPVDSSSIVGAFAKLAGNRANNVHPMQSVYLGSDRRFNRYWLFLGTCNANDPGHRCVFFESSEDGHWEVINNKEALRALLSVLDDRGRREARLIESLEKRESFLCQAMLSRQVTQSETAHFTDIVREDSSSPVSDIDNNLCLNEIANDQFSSQHAAIVFEIGSKREKSLLWSLIQEFDDWIWANFNFNLNSVKHRRRSYLDSLTRCKSCHDLYWRDEKHCKICHATFEVDIDLEERYAIHAATCMRKEECDTFPDHKVLSSQLQSLKAAVYAIESAMPEDALIGAWRKSAHRLWAKRLRRSSSVSEITQVIGDFVGAINEEWLWHCSDQGQTLMGEIINCFPSMPQTTSAIALWLVKLDTLIAPYVEKAPPERDQPLCRTRNTSRRASKR</sequence>
<keyword id="KW-0238">DNA-binding</keyword>
<keyword id="KW-0287">Flowering</keyword>
<keyword id="KW-0371">Homeobox</keyword>
<keyword id="KW-0539">Nucleus</keyword>
<keyword id="KW-1185">Reference proteome</keyword>
<keyword id="KW-0804">Transcription</keyword>
<keyword id="KW-0805">Transcription regulation</keyword>
<evidence type="ECO:0000250" key="1">
    <source>
        <dbReference type="UniProtKB" id="F4HY56"/>
    </source>
</evidence>
<evidence type="ECO:0000255" key="2">
    <source>
        <dbReference type="PROSITE-ProRule" id="PRU00063"/>
    </source>
</evidence>
<evidence type="ECO:0000255" key="3">
    <source>
        <dbReference type="PROSITE-ProRule" id="PRU00108"/>
    </source>
</evidence>
<evidence type="ECO:0000256" key="4">
    <source>
        <dbReference type="SAM" id="MobiDB-lite"/>
    </source>
</evidence>
<evidence type="ECO:0000305" key="5"/>
<evidence type="ECO:0000312" key="6">
    <source>
        <dbReference type="Araport" id="AT4G12750"/>
    </source>
</evidence>
<evidence type="ECO:0000312" key="7">
    <source>
        <dbReference type="EMBL" id="CAB40992.1"/>
    </source>
</evidence>
<feature type="chain" id="PRO_0000435115" description="Homeobox-DDT domain protein RLT3">
    <location>
        <begin position="1"/>
        <end position="1131"/>
    </location>
</feature>
<feature type="domain" description="DDT" evidence="2">
    <location>
        <begin position="365"/>
        <end position="424"/>
    </location>
</feature>
<feature type="DNA-binding region" description="Homeobox; TALE-type" evidence="3">
    <location>
        <begin position="2"/>
        <end position="56"/>
    </location>
</feature>
<feature type="region of interest" description="Disordered" evidence="4">
    <location>
        <begin position="239"/>
        <end position="264"/>
    </location>
</feature>
<feature type="region of interest" description="Disordered" evidence="4">
    <location>
        <begin position="579"/>
        <end position="609"/>
    </location>
</feature>
<feature type="compositionally biased region" description="Basic residues" evidence="4">
    <location>
        <begin position="239"/>
        <end position="251"/>
    </location>
</feature>
<feature type="compositionally biased region" description="Basic and acidic residues" evidence="4">
    <location>
        <begin position="252"/>
        <end position="264"/>
    </location>
</feature>
<feature type="compositionally biased region" description="Acidic residues" evidence="4">
    <location>
        <begin position="587"/>
        <end position="600"/>
    </location>
</feature>
<organism>
    <name type="scientific">Arabidopsis thaliana</name>
    <name type="common">Mouse-ear cress</name>
    <dbReference type="NCBI Taxonomy" id="3702"/>
    <lineage>
        <taxon>Eukaryota</taxon>
        <taxon>Viridiplantae</taxon>
        <taxon>Streptophyta</taxon>
        <taxon>Embryophyta</taxon>
        <taxon>Tracheophyta</taxon>
        <taxon>Spermatophyta</taxon>
        <taxon>Magnoliopsida</taxon>
        <taxon>eudicotyledons</taxon>
        <taxon>Gunneridae</taxon>
        <taxon>Pentapetalae</taxon>
        <taxon>rosids</taxon>
        <taxon>malvids</taxon>
        <taxon>Brassicales</taxon>
        <taxon>Brassicaceae</taxon>
        <taxon>Camelineae</taxon>
        <taxon>Arabidopsis</taxon>
    </lineage>
</organism>
<gene>
    <name evidence="5" type="primary">RLT3</name>
    <name evidence="6" type="ordered locus">At4g12750</name>
    <name evidence="7" type="ORF">T20K18.100</name>
</gene>
<name>RLT3_ARATH</name>
<comment type="function">
    <text evidence="1">Transcriptional regulator required for the maintenance of the plant vegetative phase. May prevent the early activation of the vegetative-to-reproductive transition by regulating key genes that contribute to flower timing.</text>
</comment>
<comment type="subcellular location">
    <subcellularLocation>
        <location evidence="2">Nucleus</location>
    </subcellularLocation>
</comment>
<comment type="sequence caution" evidence="5">
    <conflict type="erroneous gene model prediction">
        <sequence resource="EMBL-CDS" id="CAB40992"/>
    </conflict>
</comment>
<comment type="sequence caution" evidence="5">
    <conflict type="erroneous gene model prediction">
        <sequence resource="EMBL-CDS" id="CAB78317"/>
    </conflict>
</comment>